<dbReference type="EMBL" id="CP001634">
    <property type="protein sequence ID" value="ACR80583.1"/>
    <property type="molecule type" value="Genomic_DNA"/>
</dbReference>
<dbReference type="RefSeq" id="WP_015869226.1">
    <property type="nucleotide sequence ID" value="NC_012785.1"/>
</dbReference>
<dbReference type="SMR" id="C5CGR4"/>
<dbReference type="STRING" id="521045.Kole_1902"/>
<dbReference type="KEGG" id="kol:Kole_1902"/>
<dbReference type="eggNOG" id="COG0087">
    <property type="taxonomic scope" value="Bacteria"/>
</dbReference>
<dbReference type="HOGENOM" id="CLU_044142_4_1_0"/>
<dbReference type="OrthoDB" id="9806135at2"/>
<dbReference type="Proteomes" id="UP000002382">
    <property type="component" value="Chromosome"/>
</dbReference>
<dbReference type="GO" id="GO:0022625">
    <property type="term" value="C:cytosolic large ribosomal subunit"/>
    <property type="evidence" value="ECO:0007669"/>
    <property type="project" value="TreeGrafter"/>
</dbReference>
<dbReference type="GO" id="GO:0019843">
    <property type="term" value="F:rRNA binding"/>
    <property type="evidence" value="ECO:0007669"/>
    <property type="project" value="UniProtKB-UniRule"/>
</dbReference>
<dbReference type="GO" id="GO:0003735">
    <property type="term" value="F:structural constituent of ribosome"/>
    <property type="evidence" value="ECO:0007669"/>
    <property type="project" value="InterPro"/>
</dbReference>
<dbReference type="GO" id="GO:0006412">
    <property type="term" value="P:translation"/>
    <property type="evidence" value="ECO:0007669"/>
    <property type="project" value="UniProtKB-UniRule"/>
</dbReference>
<dbReference type="FunFam" id="2.40.30.10:FF:000004">
    <property type="entry name" value="50S ribosomal protein L3"/>
    <property type="match status" value="1"/>
</dbReference>
<dbReference type="Gene3D" id="3.30.160.810">
    <property type="match status" value="1"/>
</dbReference>
<dbReference type="Gene3D" id="2.40.30.10">
    <property type="entry name" value="Translation factors"/>
    <property type="match status" value="1"/>
</dbReference>
<dbReference type="HAMAP" id="MF_01325_B">
    <property type="entry name" value="Ribosomal_uL3_B"/>
    <property type="match status" value="1"/>
</dbReference>
<dbReference type="InterPro" id="IPR000597">
    <property type="entry name" value="Ribosomal_uL3"/>
</dbReference>
<dbReference type="InterPro" id="IPR019927">
    <property type="entry name" value="Ribosomal_uL3_bac/org-type"/>
</dbReference>
<dbReference type="InterPro" id="IPR019926">
    <property type="entry name" value="Ribosomal_uL3_CS"/>
</dbReference>
<dbReference type="InterPro" id="IPR009000">
    <property type="entry name" value="Transl_B-barrel_sf"/>
</dbReference>
<dbReference type="NCBIfam" id="TIGR03625">
    <property type="entry name" value="L3_bact"/>
    <property type="match status" value="1"/>
</dbReference>
<dbReference type="PANTHER" id="PTHR11229">
    <property type="entry name" value="50S RIBOSOMAL PROTEIN L3"/>
    <property type="match status" value="1"/>
</dbReference>
<dbReference type="PANTHER" id="PTHR11229:SF16">
    <property type="entry name" value="LARGE RIBOSOMAL SUBUNIT PROTEIN UL3C"/>
    <property type="match status" value="1"/>
</dbReference>
<dbReference type="Pfam" id="PF00297">
    <property type="entry name" value="Ribosomal_L3"/>
    <property type="match status" value="1"/>
</dbReference>
<dbReference type="SUPFAM" id="SSF50447">
    <property type="entry name" value="Translation proteins"/>
    <property type="match status" value="1"/>
</dbReference>
<dbReference type="PROSITE" id="PS00474">
    <property type="entry name" value="RIBOSOMAL_L3"/>
    <property type="match status" value="1"/>
</dbReference>
<name>RL3_KOSOT</name>
<evidence type="ECO:0000255" key="1">
    <source>
        <dbReference type="HAMAP-Rule" id="MF_01325"/>
    </source>
</evidence>
<evidence type="ECO:0000305" key="2"/>
<proteinExistence type="inferred from homology"/>
<accession>C5CGR4</accession>
<protein>
    <recommendedName>
        <fullName evidence="1">Large ribosomal subunit protein uL3</fullName>
    </recommendedName>
    <alternativeName>
        <fullName evidence="2">50S ribosomal protein L3</fullName>
    </alternativeName>
</protein>
<sequence>MKGIIGRKLGMTTIYEDGKALGVTVIKAGPCTVVQKKTAAGGEYNAIQLGFEELSPERAKKLLTKPILKKFEAAKVKPHRILKEIRVENPDEYNVGDVIDAGIFKEGELVDVTGWTKGRGFTGAMKRWNFGGGEVTHGSKFHRELGSVGNHTEPAKIWKGKKMPGRYGNERVTVLNVKVVKVDAENGLIAIHGAVPGARGGLVIIRAAKRPRK</sequence>
<gene>
    <name evidence="1" type="primary">rplC</name>
    <name type="ordered locus">Kole_1902</name>
</gene>
<comment type="function">
    <text evidence="1">One of the primary rRNA binding proteins, it binds directly near the 3'-end of the 23S rRNA, where it nucleates assembly of the 50S subunit.</text>
</comment>
<comment type="subunit">
    <text evidence="1">Part of the 50S ribosomal subunit. Forms a cluster with proteins L14 and L19.</text>
</comment>
<comment type="similarity">
    <text evidence="1">Belongs to the universal ribosomal protein uL3 family.</text>
</comment>
<organism>
    <name type="scientific">Kosmotoga olearia (strain ATCC BAA-1733 / DSM 21960 / TBF 19.5.1)</name>
    <dbReference type="NCBI Taxonomy" id="521045"/>
    <lineage>
        <taxon>Bacteria</taxon>
        <taxon>Thermotogati</taxon>
        <taxon>Thermotogota</taxon>
        <taxon>Thermotogae</taxon>
        <taxon>Kosmotogales</taxon>
        <taxon>Kosmotogaceae</taxon>
        <taxon>Kosmotoga</taxon>
    </lineage>
</organism>
<feature type="chain" id="PRO_1000214513" description="Large ribosomal subunit protein uL3">
    <location>
        <begin position="1"/>
        <end position="213"/>
    </location>
</feature>
<keyword id="KW-1185">Reference proteome</keyword>
<keyword id="KW-0687">Ribonucleoprotein</keyword>
<keyword id="KW-0689">Ribosomal protein</keyword>
<keyword id="KW-0694">RNA-binding</keyword>
<keyword id="KW-0699">rRNA-binding</keyword>
<reference key="1">
    <citation type="submission" date="2009-06" db="EMBL/GenBank/DDBJ databases">
        <title>Complete sequence of Thermotogales bacterium TBF 19.5.1.</title>
        <authorList>
            <consortium name="US DOE Joint Genome Institute"/>
            <person name="Lucas S."/>
            <person name="Copeland A."/>
            <person name="Lapidus A."/>
            <person name="Glavina del Rio T."/>
            <person name="Tice H."/>
            <person name="Bruce D."/>
            <person name="Goodwin L."/>
            <person name="Pitluck S."/>
            <person name="Chertkov O."/>
            <person name="Brettin T."/>
            <person name="Detter J.C."/>
            <person name="Han C."/>
            <person name="Schmutz J."/>
            <person name="Larimer F."/>
            <person name="Land M."/>
            <person name="Hauser L."/>
            <person name="Kyrpides N."/>
            <person name="Ovchinnikova G."/>
            <person name="Noll K."/>
        </authorList>
    </citation>
    <scope>NUCLEOTIDE SEQUENCE [LARGE SCALE GENOMIC DNA]</scope>
    <source>
        <strain>ATCC BAA-1733 / DSM 21960 / TBF 19.5.1</strain>
    </source>
</reference>